<accession>Q661D3</accession>
<organism>
    <name type="scientific">Borrelia garinii subsp. bavariensis (strain ATCC BAA-2496 / DSM 23469 / PBi)</name>
    <name type="common">Borreliella bavariensis</name>
    <dbReference type="NCBI Taxonomy" id="290434"/>
    <lineage>
        <taxon>Bacteria</taxon>
        <taxon>Pseudomonadati</taxon>
        <taxon>Spirochaetota</taxon>
        <taxon>Spirochaetia</taxon>
        <taxon>Spirochaetales</taxon>
        <taxon>Borreliaceae</taxon>
        <taxon>Borreliella</taxon>
    </lineage>
</organism>
<evidence type="ECO:0000255" key="1">
    <source>
        <dbReference type="HAMAP-Rule" id="MF_01345"/>
    </source>
</evidence>
<evidence type="ECO:0000305" key="2"/>
<sequence>MARENKKELIGKVVSDKMSKTIVVEIVQRKMHPIYHKYLKVSKKVKAHDEKEVSKVGDKVKIIEVRPISKDKRWALVEVLEKLK</sequence>
<proteinExistence type="inferred from homology"/>
<dbReference type="EMBL" id="CP000013">
    <property type="protein sequence ID" value="AAU07338.1"/>
    <property type="molecule type" value="Genomic_DNA"/>
</dbReference>
<dbReference type="RefSeq" id="WP_011193806.1">
    <property type="nucleotide sequence ID" value="NZ_CP028872.1"/>
</dbReference>
<dbReference type="SMR" id="Q661D3"/>
<dbReference type="GeneID" id="45161282"/>
<dbReference type="KEGG" id="bga:BG0499"/>
<dbReference type="eggNOG" id="COG0186">
    <property type="taxonomic scope" value="Bacteria"/>
</dbReference>
<dbReference type="HOGENOM" id="CLU_073626_1_0_12"/>
<dbReference type="OrthoDB" id="9811714at2"/>
<dbReference type="Proteomes" id="UP000002276">
    <property type="component" value="Chromosome"/>
</dbReference>
<dbReference type="GO" id="GO:0022627">
    <property type="term" value="C:cytosolic small ribosomal subunit"/>
    <property type="evidence" value="ECO:0007669"/>
    <property type="project" value="TreeGrafter"/>
</dbReference>
<dbReference type="GO" id="GO:0019843">
    <property type="term" value="F:rRNA binding"/>
    <property type="evidence" value="ECO:0007669"/>
    <property type="project" value="UniProtKB-UniRule"/>
</dbReference>
<dbReference type="GO" id="GO:0003735">
    <property type="term" value="F:structural constituent of ribosome"/>
    <property type="evidence" value="ECO:0007669"/>
    <property type="project" value="InterPro"/>
</dbReference>
<dbReference type="GO" id="GO:0006412">
    <property type="term" value="P:translation"/>
    <property type="evidence" value="ECO:0007669"/>
    <property type="project" value="UniProtKB-UniRule"/>
</dbReference>
<dbReference type="CDD" id="cd00364">
    <property type="entry name" value="Ribosomal_uS17"/>
    <property type="match status" value="1"/>
</dbReference>
<dbReference type="Gene3D" id="2.40.50.140">
    <property type="entry name" value="Nucleic acid-binding proteins"/>
    <property type="match status" value="1"/>
</dbReference>
<dbReference type="HAMAP" id="MF_01345_B">
    <property type="entry name" value="Ribosomal_uS17_B"/>
    <property type="match status" value="1"/>
</dbReference>
<dbReference type="InterPro" id="IPR012340">
    <property type="entry name" value="NA-bd_OB-fold"/>
</dbReference>
<dbReference type="InterPro" id="IPR000266">
    <property type="entry name" value="Ribosomal_uS17"/>
</dbReference>
<dbReference type="InterPro" id="IPR019984">
    <property type="entry name" value="Ribosomal_uS17_bact/chlr"/>
</dbReference>
<dbReference type="InterPro" id="IPR019979">
    <property type="entry name" value="Ribosomal_uS17_CS"/>
</dbReference>
<dbReference type="NCBIfam" id="NF004123">
    <property type="entry name" value="PRK05610.1"/>
    <property type="match status" value="1"/>
</dbReference>
<dbReference type="NCBIfam" id="TIGR03635">
    <property type="entry name" value="uS17_bact"/>
    <property type="match status" value="1"/>
</dbReference>
<dbReference type="PANTHER" id="PTHR10744">
    <property type="entry name" value="40S RIBOSOMAL PROTEIN S11 FAMILY MEMBER"/>
    <property type="match status" value="1"/>
</dbReference>
<dbReference type="PANTHER" id="PTHR10744:SF1">
    <property type="entry name" value="SMALL RIBOSOMAL SUBUNIT PROTEIN US17M"/>
    <property type="match status" value="1"/>
</dbReference>
<dbReference type="Pfam" id="PF00366">
    <property type="entry name" value="Ribosomal_S17"/>
    <property type="match status" value="1"/>
</dbReference>
<dbReference type="PRINTS" id="PR00973">
    <property type="entry name" value="RIBOSOMALS17"/>
</dbReference>
<dbReference type="SUPFAM" id="SSF50249">
    <property type="entry name" value="Nucleic acid-binding proteins"/>
    <property type="match status" value="1"/>
</dbReference>
<dbReference type="PROSITE" id="PS00056">
    <property type="entry name" value="RIBOSOMAL_S17"/>
    <property type="match status" value="1"/>
</dbReference>
<keyword id="KW-0687">Ribonucleoprotein</keyword>
<keyword id="KW-0689">Ribosomal protein</keyword>
<keyword id="KW-0694">RNA-binding</keyword>
<keyword id="KW-0699">rRNA-binding</keyword>
<comment type="function">
    <text evidence="1">One of the primary rRNA binding proteins, it binds specifically to the 5'-end of 16S ribosomal RNA.</text>
</comment>
<comment type="subunit">
    <text evidence="1">Part of the 30S ribosomal subunit.</text>
</comment>
<comment type="similarity">
    <text evidence="1">Belongs to the universal ribosomal protein uS17 family.</text>
</comment>
<reference key="1">
    <citation type="journal article" date="2004" name="Nucleic Acids Res.">
        <title>Comparative analysis of the Borrelia garinii genome.</title>
        <authorList>
            <person name="Gloeckner G."/>
            <person name="Lehmann R."/>
            <person name="Romualdi A."/>
            <person name="Pradella S."/>
            <person name="Schulte-Spechtel U."/>
            <person name="Schilhabel M."/>
            <person name="Wilske B."/>
            <person name="Suehnel J."/>
            <person name="Platzer M."/>
        </authorList>
    </citation>
    <scope>NUCLEOTIDE SEQUENCE [LARGE SCALE GENOMIC DNA]</scope>
    <source>
        <strain>ATCC BAA-2496 / DSM 23469 / PBi</strain>
    </source>
</reference>
<feature type="chain" id="PRO_0000233439" description="Small ribosomal subunit protein uS17">
    <location>
        <begin position="1"/>
        <end position="84"/>
    </location>
</feature>
<name>RS17_BORGP</name>
<protein>
    <recommendedName>
        <fullName evidence="1">Small ribosomal subunit protein uS17</fullName>
    </recommendedName>
    <alternativeName>
        <fullName evidence="2">30S ribosomal protein S17</fullName>
    </alternativeName>
</protein>
<gene>
    <name evidence="1" type="primary">rpsQ</name>
    <name type="ordered locus">BG0499</name>
</gene>